<sequence>MNKVFSDFLAWTREHEWGCDESYNLTLSNGTKLSVWDSGVLEVSPASPGHKDVVLSCAVHGNETAPIEICRDIINDIIDEKQTVTHRTLFLIANPASINKGERFVEENMNRLFSGEHGKGSTQNKERERAAKMENYVERFYQSAPEGSRERFHYDLHTAIRDSKREKFAVYPFTHGAPYSRQQLQFLLACGVDTVLLNQAPTTTFSYFSARQFNAHAFTVELGKVRPFGENDRAKFAAAETTLRDLISQTELDFGPFEPEQHYVFKEAQTINRTQPDFELNFADDVANFTSFNKGELLAWDGDKACYAQHDGEHIIFPNAKVALGHRALLTVVRVPTESLDLV</sequence>
<keyword id="KW-0056">Arginine metabolism</keyword>
<keyword id="KW-0378">Hydrolase</keyword>
<keyword id="KW-0479">Metal-binding</keyword>
<keyword id="KW-1185">Reference proteome</keyword>
<keyword id="KW-0862">Zinc</keyword>
<organism>
    <name type="scientific">Idiomarina loihiensis (strain ATCC BAA-735 / DSM 15497 / L2-TR)</name>
    <dbReference type="NCBI Taxonomy" id="283942"/>
    <lineage>
        <taxon>Bacteria</taxon>
        <taxon>Pseudomonadati</taxon>
        <taxon>Pseudomonadota</taxon>
        <taxon>Gammaproteobacteria</taxon>
        <taxon>Alteromonadales</taxon>
        <taxon>Idiomarinaceae</taxon>
        <taxon>Idiomarina</taxon>
    </lineage>
</organism>
<feature type="chain" id="PRO_0000257713" description="Succinylglutamate desuccinylase">
    <location>
        <begin position="1"/>
        <end position="343"/>
    </location>
</feature>
<feature type="active site" evidence="1">
    <location>
        <position position="221"/>
    </location>
</feature>
<feature type="binding site" evidence="1">
    <location>
        <position position="60"/>
    </location>
    <ligand>
        <name>Zn(2+)</name>
        <dbReference type="ChEBI" id="CHEBI:29105"/>
    </ligand>
</feature>
<feature type="binding site" evidence="1">
    <location>
        <position position="63"/>
    </location>
    <ligand>
        <name>Zn(2+)</name>
        <dbReference type="ChEBI" id="CHEBI:29105"/>
    </ligand>
</feature>
<feature type="binding site" evidence="1">
    <location>
        <position position="157"/>
    </location>
    <ligand>
        <name>Zn(2+)</name>
        <dbReference type="ChEBI" id="CHEBI:29105"/>
    </ligand>
</feature>
<proteinExistence type="inferred from homology"/>
<gene>
    <name evidence="1" type="primary">astE</name>
    <name type="ordered locus">IL1681</name>
</gene>
<protein>
    <recommendedName>
        <fullName evidence="1">Succinylglutamate desuccinylase</fullName>
        <ecNumber evidence="1">3.5.1.96</ecNumber>
    </recommendedName>
</protein>
<accession>Q5QUK3</accession>
<evidence type="ECO:0000255" key="1">
    <source>
        <dbReference type="HAMAP-Rule" id="MF_00767"/>
    </source>
</evidence>
<dbReference type="EC" id="3.5.1.96" evidence="1"/>
<dbReference type="EMBL" id="AE017340">
    <property type="protein sequence ID" value="AAV82514.1"/>
    <property type="molecule type" value="Genomic_DNA"/>
</dbReference>
<dbReference type="RefSeq" id="WP_011234917.1">
    <property type="nucleotide sequence ID" value="NC_006512.1"/>
</dbReference>
<dbReference type="SMR" id="Q5QUK3"/>
<dbReference type="STRING" id="283942.IL1681"/>
<dbReference type="GeneID" id="41336854"/>
<dbReference type="KEGG" id="ilo:IL1681"/>
<dbReference type="eggNOG" id="COG2988">
    <property type="taxonomic scope" value="Bacteria"/>
</dbReference>
<dbReference type="HOGENOM" id="CLU_071608_0_0_6"/>
<dbReference type="OrthoDB" id="5290473at2"/>
<dbReference type="UniPathway" id="UPA00185">
    <property type="reaction ID" value="UER00283"/>
</dbReference>
<dbReference type="Proteomes" id="UP000001171">
    <property type="component" value="Chromosome"/>
</dbReference>
<dbReference type="GO" id="GO:0016788">
    <property type="term" value="F:hydrolase activity, acting on ester bonds"/>
    <property type="evidence" value="ECO:0007669"/>
    <property type="project" value="UniProtKB-UniRule"/>
</dbReference>
<dbReference type="GO" id="GO:0009017">
    <property type="term" value="F:succinylglutamate desuccinylase activity"/>
    <property type="evidence" value="ECO:0007669"/>
    <property type="project" value="UniProtKB-EC"/>
</dbReference>
<dbReference type="GO" id="GO:0008270">
    <property type="term" value="F:zinc ion binding"/>
    <property type="evidence" value="ECO:0007669"/>
    <property type="project" value="UniProtKB-UniRule"/>
</dbReference>
<dbReference type="GO" id="GO:0019544">
    <property type="term" value="P:arginine catabolic process to glutamate"/>
    <property type="evidence" value="ECO:0007669"/>
    <property type="project" value="UniProtKB-UniRule"/>
</dbReference>
<dbReference type="GO" id="GO:0019545">
    <property type="term" value="P:arginine catabolic process to succinate"/>
    <property type="evidence" value="ECO:0007669"/>
    <property type="project" value="UniProtKB-UniRule"/>
</dbReference>
<dbReference type="CDD" id="cd03855">
    <property type="entry name" value="M14_ASTE"/>
    <property type="match status" value="1"/>
</dbReference>
<dbReference type="Gene3D" id="3.40.630.10">
    <property type="entry name" value="Zn peptidases"/>
    <property type="match status" value="1"/>
</dbReference>
<dbReference type="HAMAP" id="MF_00767">
    <property type="entry name" value="Arg_catab_AstE"/>
    <property type="match status" value="1"/>
</dbReference>
<dbReference type="InterPro" id="IPR050178">
    <property type="entry name" value="AspA/AstE_fam"/>
</dbReference>
<dbReference type="InterPro" id="IPR055438">
    <property type="entry name" value="AstE_AspA_cat"/>
</dbReference>
<dbReference type="InterPro" id="IPR007036">
    <property type="entry name" value="Aste_AspA_hybrid_dom"/>
</dbReference>
<dbReference type="InterPro" id="IPR016681">
    <property type="entry name" value="SuccinylGlu_desuccinylase"/>
</dbReference>
<dbReference type="NCBIfam" id="TIGR03242">
    <property type="entry name" value="arg_catab_astE"/>
    <property type="match status" value="1"/>
</dbReference>
<dbReference type="NCBIfam" id="NF003706">
    <property type="entry name" value="PRK05324.1"/>
    <property type="match status" value="1"/>
</dbReference>
<dbReference type="PANTHER" id="PTHR15162">
    <property type="entry name" value="ASPARTOACYLASE"/>
    <property type="match status" value="1"/>
</dbReference>
<dbReference type="PANTHER" id="PTHR15162:SF7">
    <property type="entry name" value="SUCCINYLGLUTAMATE DESUCCINYLASE"/>
    <property type="match status" value="1"/>
</dbReference>
<dbReference type="Pfam" id="PF24827">
    <property type="entry name" value="AstE_AspA_cat"/>
    <property type="match status" value="1"/>
</dbReference>
<dbReference type="Pfam" id="PF04952">
    <property type="entry name" value="AstE_AspA_hybrid"/>
    <property type="match status" value="1"/>
</dbReference>
<dbReference type="PIRSF" id="PIRSF017020">
    <property type="entry name" value="AstE"/>
    <property type="match status" value="1"/>
</dbReference>
<dbReference type="SUPFAM" id="SSF53187">
    <property type="entry name" value="Zn-dependent exopeptidases"/>
    <property type="match status" value="1"/>
</dbReference>
<reference key="1">
    <citation type="journal article" date="2004" name="Proc. Natl. Acad. Sci. U.S.A.">
        <title>Genome sequence of the deep-sea gamma-proteobacterium Idiomarina loihiensis reveals amino acid fermentation as a source of carbon and energy.</title>
        <authorList>
            <person name="Hou S."/>
            <person name="Saw J.H."/>
            <person name="Lee K.S."/>
            <person name="Freitas T.A."/>
            <person name="Belisle C."/>
            <person name="Kawarabayasi Y."/>
            <person name="Donachie S.P."/>
            <person name="Pikina A."/>
            <person name="Galperin M.Y."/>
            <person name="Koonin E.V."/>
            <person name="Makarova K.S."/>
            <person name="Omelchenko M.V."/>
            <person name="Sorokin A."/>
            <person name="Wolf Y.I."/>
            <person name="Li Q.X."/>
            <person name="Keum Y.S."/>
            <person name="Campbell S."/>
            <person name="Denery J."/>
            <person name="Aizawa S."/>
            <person name="Shibata S."/>
            <person name="Malahoff A."/>
            <person name="Alam M."/>
        </authorList>
    </citation>
    <scope>NUCLEOTIDE SEQUENCE [LARGE SCALE GENOMIC DNA]</scope>
    <source>
        <strain>ATCC BAA-735 / DSM 15497 / L2-TR</strain>
    </source>
</reference>
<name>ASTE_IDILO</name>
<comment type="function">
    <text evidence="1">Transforms N(2)-succinylglutamate into succinate and glutamate.</text>
</comment>
<comment type="catalytic activity">
    <reaction evidence="1">
        <text>N-succinyl-L-glutamate + H2O = L-glutamate + succinate</text>
        <dbReference type="Rhea" id="RHEA:15169"/>
        <dbReference type="ChEBI" id="CHEBI:15377"/>
        <dbReference type="ChEBI" id="CHEBI:29985"/>
        <dbReference type="ChEBI" id="CHEBI:30031"/>
        <dbReference type="ChEBI" id="CHEBI:58763"/>
        <dbReference type="EC" id="3.5.1.96"/>
    </reaction>
</comment>
<comment type="cofactor">
    <cofactor evidence="1">
        <name>Zn(2+)</name>
        <dbReference type="ChEBI" id="CHEBI:29105"/>
    </cofactor>
    <text evidence="1">Binds 1 zinc ion per subunit.</text>
</comment>
<comment type="pathway">
    <text evidence="1">Amino-acid degradation; L-arginine degradation via AST pathway; L-glutamate and succinate from L-arginine: step 5/5.</text>
</comment>
<comment type="similarity">
    <text evidence="1">Belongs to the AspA/AstE family. Succinylglutamate desuccinylase subfamily.</text>
</comment>